<organismHost>
    <name type="scientific">Cercopithecidae</name>
    <name type="common">Old World monkeys</name>
    <dbReference type="NCBI Taxonomy" id="9527"/>
</organismHost>
<name>GAG_SIVVG</name>
<dbReference type="EMBL" id="M30931">
    <property type="protein sequence ID" value="AAA91913.1"/>
    <property type="molecule type" value="Genomic_RNA"/>
</dbReference>
<dbReference type="SMR" id="P27978"/>
<dbReference type="PRO" id="PR:P27978"/>
<dbReference type="GO" id="GO:0030430">
    <property type="term" value="C:host cell cytoplasm"/>
    <property type="evidence" value="ECO:0007669"/>
    <property type="project" value="UniProtKB-SubCell"/>
</dbReference>
<dbReference type="GO" id="GO:0042025">
    <property type="term" value="C:host cell nucleus"/>
    <property type="evidence" value="ECO:0007669"/>
    <property type="project" value="UniProtKB-SubCell"/>
</dbReference>
<dbReference type="GO" id="GO:0019013">
    <property type="term" value="C:viral nucleocapsid"/>
    <property type="evidence" value="ECO:0007669"/>
    <property type="project" value="UniProtKB-KW"/>
</dbReference>
<dbReference type="GO" id="GO:0003723">
    <property type="term" value="F:RNA binding"/>
    <property type="evidence" value="ECO:0007669"/>
    <property type="project" value="UniProtKB-KW"/>
</dbReference>
<dbReference type="GO" id="GO:0005198">
    <property type="term" value="F:structural molecule activity"/>
    <property type="evidence" value="ECO:0007669"/>
    <property type="project" value="InterPro"/>
</dbReference>
<dbReference type="GO" id="GO:0008270">
    <property type="term" value="F:zinc ion binding"/>
    <property type="evidence" value="ECO:0007669"/>
    <property type="project" value="UniProtKB-KW"/>
</dbReference>
<dbReference type="GO" id="GO:0039702">
    <property type="term" value="P:viral budding via host ESCRT complex"/>
    <property type="evidence" value="ECO:0007669"/>
    <property type="project" value="UniProtKB-KW"/>
</dbReference>
<dbReference type="GO" id="GO:0075523">
    <property type="term" value="P:viral translational frameshifting"/>
    <property type="evidence" value="ECO:0007669"/>
    <property type="project" value="UniProtKB-KW"/>
</dbReference>
<dbReference type="Gene3D" id="1.10.1200.30">
    <property type="match status" value="1"/>
</dbReference>
<dbReference type="Gene3D" id="1.10.375.10">
    <property type="entry name" value="Human Immunodeficiency Virus Type 1 Capsid Protein"/>
    <property type="match status" value="1"/>
</dbReference>
<dbReference type="Gene3D" id="1.10.150.90">
    <property type="entry name" value="Immunodeficiency lentiviruses, gag gene matrix protein p17"/>
    <property type="match status" value="1"/>
</dbReference>
<dbReference type="Gene3D" id="1.20.5.760">
    <property type="entry name" value="Single helix bin"/>
    <property type="match status" value="1"/>
</dbReference>
<dbReference type="Gene3D" id="4.10.60.10">
    <property type="entry name" value="Zinc finger, CCHC-type"/>
    <property type="match status" value="1"/>
</dbReference>
<dbReference type="InterPro" id="IPR045345">
    <property type="entry name" value="Gag_p24_C"/>
</dbReference>
<dbReference type="InterPro" id="IPR000071">
    <property type="entry name" value="Lentvrl_matrix_N"/>
</dbReference>
<dbReference type="InterPro" id="IPR012344">
    <property type="entry name" value="Matrix_HIV/RSV_N"/>
</dbReference>
<dbReference type="InterPro" id="IPR050195">
    <property type="entry name" value="Primate_lentivir_Gag_pol-like"/>
</dbReference>
<dbReference type="InterPro" id="IPR008916">
    <property type="entry name" value="Retrov_capsid_C"/>
</dbReference>
<dbReference type="InterPro" id="IPR008919">
    <property type="entry name" value="Retrov_capsid_N"/>
</dbReference>
<dbReference type="InterPro" id="IPR010999">
    <property type="entry name" value="Retrovr_matrix"/>
</dbReference>
<dbReference type="InterPro" id="IPR001878">
    <property type="entry name" value="Znf_CCHC"/>
</dbReference>
<dbReference type="InterPro" id="IPR036875">
    <property type="entry name" value="Znf_CCHC_sf"/>
</dbReference>
<dbReference type="PANTHER" id="PTHR40389">
    <property type="entry name" value="ENDOGENOUS RETROVIRUS GROUP K MEMBER 24 GAG POLYPROTEIN-RELATED"/>
    <property type="match status" value="1"/>
</dbReference>
<dbReference type="PANTHER" id="PTHR40389:SF3">
    <property type="entry name" value="IGE-BINDING PROTEIN"/>
    <property type="match status" value="1"/>
</dbReference>
<dbReference type="Pfam" id="PF00540">
    <property type="entry name" value="Gag_p17"/>
    <property type="match status" value="1"/>
</dbReference>
<dbReference type="Pfam" id="PF00607">
    <property type="entry name" value="Gag_p24"/>
    <property type="match status" value="1"/>
</dbReference>
<dbReference type="Pfam" id="PF19317">
    <property type="entry name" value="Gag_p24_C"/>
    <property type="match status" value="1"/>
</dbReference>
<dbReference type="Pfam" id="PF00098">
    <property type="entry name" value="zf-CCHC"/>
    <property type="match status" value="2"/>
</dbReference>
<dbReference type="PRINTS" id="PR00234">
    <property type="entry name" value="HIV1MATRIX"/>
</dbReference>
<dbReference type="SMART" id="SM00343">
    <property type="entry name" value="ZnF_C2HC"/>
    <property type="match status" value="2"/>
</dbReference>
<dbReference type="SUPFAM" id="SSF47836">
    <property type="entry name" value="Retroviral matrix proteins"/>
    <property type="match status" value="1"/>
</dbReference>
<dbReference type="SUPFAM" id="SSF47353">
    <property type="entry name" value="Retrovirus capsid dimerization domain-like"/>
    <property type="match status" value="1"/>
</dbReference>
<dbReference type="SUPFAM" id="SSF47943">
    <property type="entry name" value="Retrovirus capsid protein, N-terminal core domain"/>
    <property type="match status" value="1"/>
</dbReference>
<dbReference type="SUPFAM" id="SSF57756">
    <property type="entry name" value="Retrovirus zinc finger-like domains"/>
    <property type="match status" value="1"/>
</dbReference>
<dbReference type="PROSITE" id="PS50158">
    <property type="entry name" value="ZF_CCHC"/>
    <property type="match status" value="2"/>
</dbReference>
<protein>
    <recommendedName>
        <fullName>Gag polyprotein</fullName>
    </recommendedName>
    <alternativeName>
        <fullName>Pr55Gag</fullName>
    </alternativeName>
    <component>
        <recommendedName>
            <fullName>Matrix protein p17</fullName>
            <shortName>MA</shortName>
        </recommendedName>
    </component>
    <component>
        <recommendedName>
            <fullName>Capsid protein p24</fullName>
            <shortName>CA</shortName>
        </recommendedName>
    </component>
    <component>
        <recommendedName>
            <fullName>Spacer peptide p2</fullName>
        </recommendedName>
    </component>
    <component>
        <recommendedName>
            <fullName>Nucleocapsid protein p7</fullName>
            <shortName>NC</shortName>
        </recommendedName>
    </component>
    <component>
        <recommendedName>
            <fullName>Spacer peptide p1</fullName>
        </recommendedName>
    </component>
    <component>
        <recommendedName>
            <fullName>p6-gag</fullName>
        </recommendedName>
    </component>
</protein>
<organism>
    <name type="scientific">Simian immunodeficiency virus agm.vervet (isolate AGM3)</name>
    <name type="common">SIV-agm.ver</name>
    <name type="synonym">Simian immunodeficiency virus African green monkey vervet</name>
    <dbReference type="NCBI Taxonomy" id="11730"/>
    <lineage>
        <taxon>Viruses</taxon>
        <taxon>Riboviria</taxon>
        <taxon>Pararnavirae</taxon>
        <taxon>Artverviricota</taxon>
        <taxon>Revtraviricetes</taxon>
        <taxon>Ortervirales</taxon>
        <taxon>Retroviridae</taxon>
        <taxon>Orthoretrovirinae</taxon>
        <taxon>Lentivirus</taxon>
        <taxon>Simian immunodeficiency virus</taxon>
    </lineage>
</organism>
<gene>
    <name type="primary">gag</name>
</gene>
<reference key="1">
    <citation type="journal article" date="1990" name="Virology">
        <title>Complete nucleotide sequence of a simian immunodeficiency virus from African green monkeys: a novel type of intragroup divergence.</title>
        <authorList>
            <person name="Baier M."/>
            <person name="Garber C."/>
            <person name="Mueller C."/>
            <person name="Cichutek K."/>
            <person name="Kurth R."/>
        </authorList>
    </citation>
    <scope>NUCLEOTIDE SEQUENCE [GENOMIC RNA]</scope>
</reference>
<accession>P27978</accession>
<evidence type="ECO:0000250" key="1"/>
<evidence type="ECO:0000250" key="2">
    <source>
        <dbReference type="UniProtKB" id="P04591"/>
    </source>
</evidence>
<evidence type="ECO:0000250" key="3">
    <source>
        <dbReference type="UniProtKB" id="P05893"/>
    </source>
</evidence>
<evidence type="ECO:0000250" key="4">
    <source>
        <dbReference type="UniProtKB" id="P12493"/>
    </source>
</evidence>
<evidence type="ECO:0000255" key="5">
    <source>
        <dbReference type="PROSITE-ProRule" id="PRU00047"/>
    </source>
</evidence>
<evidence type="ECO:0000256" key="6">
    <source>
        <dbReference type="SAM" id="MobiDB-lite"/>
    </source>
</evidence>
<evidence type="ECO:0000305" key="7"/>
<comment type="function">
    <text evidence="1">Matrix protein p17 targets Gag and Gag-Pol polyproteins to the plasma membrane via a multipartite membrane binding signal, that includes its myristoylated N-terminus. Also mediates nuclear localization of the preintegration complex. Implicated in the release from host cell mediated by Vpu (By similarity).</text>
</comment>
<comment type="function">
    <text evidence="1">Capsid protein p24 forms the conical core of the virus that encapsulates the genomic RNA-nucleocapsid complex.</text>
</comment>
<comment type="function">
    <text evidence="1">Nucleocapsid protein p7 encapsulates and protects viral dimeric unspliced (genomic) RNA. Binds these RNAs through its zinc fingers (By similarity).</text>
</comment>
<comment type="function">
    <text evidence="1">p6-gag plays a role in budding of the assembled particle by interacting with the host class E VPS proteins TSG101 and PDCD6IP/AIP1.</text>
</comment>
<comment type="subunit">
    <molecule>Matrix protein p17</molecule>
    <text evidence="2 4">Homotrimer. Interacts with gp41 (via C-terminus).</text>
</comment>
<comment type="subunit">
    <molecule>p6-gag</molecule>
    <text evidence="4">Interacts with host TSG101 (By similarity).</text>
</comment>
<comment type="subcellular location">
    <molecule>Matrix protein p17</molecule>
    <subcellularLocation>
        <location evidence="7">Virion</location>
    </subcellularLocation>
    <subcellularLocation>
        <location evidence="1">Host nucleus</location>
    </subcellularLocation>
    <subcellularLocation>
        <location evidence="1">Host cytoplasm</location>
    </subcellularLocation>
    <text evidence="1">Following virus entry, the nuclear localization signal (NLS) of the matrix protein participates with Vpr to the nuclear localization of the viral genome. During virus production, the nuclear export activity of the matrix protein counteracts the NLS to maintain the Gag and Gag-Pol polyproteins in the cytoplasm, thereby directing unspliced RNA to the plasma membrane (By similarity).</text>
</comment>
<comment type="subcellular location">
    <molecule>Capsid protein p24</molecule>
    <subcellularLocation>
        <location evidence="7">Virion</location>
    </subcellularLocation>
</comment>
<comment type="subcellular location">
    <molecule>Nucleocapsid protein p7</molecule>
    <subcellularLocation>
        <location evidence="7">Virion</location>
    </subcellularLocation>
</comment>
<comment type="alternative products">
    <event type="ribosomal frameshifting"/>
    <isoform>
        <id>P27978-1</id>
        <name>Gag polyprotein</name>
        <sequence type="displayed"/>
    </isoform>
    <isoform>
        <id>P27980-1</id>
        <name>Gag-Pol polyprotein</name>
        <sequence type="external"/>
    </isoform>
    <text>Translation results in the formation of the Gag polyprotein most of the time. Ribosomal frameshifting at the gag-pol genes boundary occurs at low frequency and produces the Gag-Pol polyprotein. This strategy of translation probably allows the virus to modulate the quantity of each viral protein. Maintenance of a correct Gag to Gag-Pol ratio is essential for RNA dimerization and viral infectivity.</text>
</comment>
<comment type="domain">
    <text evidence="3">Late-budding domains (L domains) are short sequence motifs essential for viral particle budding. They recruit proteins of the host ESCRT machinery (Endosomal Sorting Complex Required for Transport) or ESCRT-associated proteins. p6-gag contains one L domain: a PTAP/PSAP motif, which interacts with the UEV domain of TSG101.</text>
</comment>
<comment type="PTM">
    <text evidence="1">Capsid protein p24 is phosphorylated.</text>
</comment>
<comment type="PTM">
    <text evidence="1">Specific enzymatic cleavages by the viral protease yield mature proteins. The polyprotein is cleaved during and after budding, this process is termed maturation (By similarity).</text>
</comment>
<comment type="miscellaneous">
    <text>This is an African green monkey isolate.</text>
</comment>
<comment type="miscellaneous">
    <molecule>Isoform Gag polyprotein</molecule>
    <text>Produced by conventional translation.</text>
</comment>
<comment type="similarity">
    <text evidence="7">Belongs to the primate lentivirus group gag polyprotein family.</text>
</comment>
<keyword id="KW-0167">Capsid protein</keyword>
<keyword id="KW-1035">Host cytoplasm</keyword>
<keyword id="KW-1048">Host nucleus</keyword>
<keyword id="KW-0945">Host-virus interaction</keyword>
<keyword id="KW-0449">Lipoprotein</keyword>
<keyword id="KW-0479">Metal-binding</keyword>
<keyword id="KW-0519">Myristate</keyword>
<keyword id="KW-0597">Phosphoprotein</keyword>
<keyword id="KW-0677">Repeat</keyword>
<keyword id="KW-0688">Ribosomal frameshifting</keyword>
<keyword id="KW-0694">RNA-binding</keyword>
<keyword id="KW-1198">Viral budding</keyword>
<keyword id="KW-1187">Viral budding via the host ESCRT complexes</keyword>
<keyword id="KW-0543">Viral nucleoprotein</keyword>
<keyword id="KW-1188">Viral release from host cell</keyword>
<keyword id="KW-0946">Virion</keyword>
<keyword id="KW-0862">Zinc</keyword>
<keyword id="KW-0863">Zinc-finger</keyword>
<proteinExistence type="inferred from homology"/>
<sequence length="521" mass="58409">MGAATSALNRRQLDKFEHIRLRPTGKKKYQIKHLIWAGKEMERFGLHERLLESEEGCKKIIEVLYPLEPTGSEGLKSLFNLVCVLFCVHKDKEVKDTEEAVAIVRQCCHLVEKERNAERNTTETSSGQKKNDKGVTVPPGGSQNFPAQQQGNAWIHVPLSPRTLNAWVKAVEEKKFGAEIVPMFQALSEGCTPYDINQMLNVLGDHQGALQIVKEIINEEAAQWDIAHPPPAGPLPAGQLRDPRGSDIAGTTSTVQEQLEWIYTANPRVDVGAIYRRWIILGLQKCVKMYNPVSVLDIRQGPKEAFKDYVDRFYKAIRAEQASGEVKQWMTESLLIQNANPDCKVILKGLGMHPTLEEMLTACQGVGGPSYKAKVMAEMMQNMQSQNMMQQGGQRGRPRPPVKCYNCGKFGHMQRQCPEPRKMRCLKCGKPGHLAKDCRGQVNFLGYGRWMGAKPRNFPAATLGVEPTAPPPPSPYDPAKKLLQQYADKGKQLREQRKKPPAVNPDWTEGYSLNSLFGEDQ</sequence>
<feature type="initiator methionine" description="Removed; by host" evidence="1">
    <location>
        <position position="1"/>
    </location>
</feature>
<feature type="chain" id="PRO_0000316109" description="Gag polyprotein" evidence="1">
    <location>
        <begin position="2"/>
        <end position="521"/>
    </location>
</feature>
<feature type="chain" id="PRO_0000038622" description="Matrix protein p17" evidence="1">
    <location>
        <begin position="2"/>
        <end position="145"/>
    </location>
</feature>
<feature type="chain" id="PRO_0000038623" description="Capsid protein p24" evidence="1">
    <location>
        <begin position="146"/>
        <end position="376"/>
    </location>
</feature>
<feature type="peptide" id="PRO_0000316110" description="Spacer peptide p2" evidence="1">
    <location>
        <begin position="377"/>
        <end position="390"/>
    </location>
</feature>
<feature type="chain" id="PRO_0000038624" description="Nucleocapsid protein p7" evidence="1">
    <location>
        <begin position="391"/>
        <end position="443"/>
    </location>
</feature>
<feature type="peptide" id="PRO_0000316111" description="Spacer peptide p1" evidence="1">
    <location>
        <begin position="444"/>
        <end position="458"/>
    </location>
</feature>
<feature type="chain" id="PRO_0000316112" description="p6-gag" evidence="1">
    <location>
        <begin position="483"/>
        <end position="521"/>
    </location>
</feature>
<feature type="zinc finger region" description="CCHC-type 1" evidence="5">
    <location>
        <begin position="402"/>
        <end position="419"/>
    </location>
</feature>
<feature type="zinc finger region" description="CCHC-type 2" evidence="5">
    <location>
        <begin position="423"/>
        <end position="440"/>
    </location>
</feature>
<feature type="region of interest" description="Disordered" evidence="6">
    <location>
        <begin position="116"/>
        <end position="144"/>
    </location>
</feature>
<feature type="region of interest" description="Disordered" evidence="6">
    <location>
        <begin position="489"/>
        <end position="521"/>
    </location>
</feature>
<feature type="short sequence motif" description="Nuclear export signal" evidence="1">
    <location>
        <begin position="16"/>
        <end position="22"/>
    </location>
</feature>
<feature type="short sequence motif" description="Nuclear localization signal" evidence="1">
    <location>
        <begin position="26"/>
        <end position="32"/>
    </location>
</feature>
<feature type="short sequence motif" description="PTAP/PSAP motif" evidence="3">
    <location>
        <begin position="467"/>
        <end position="470"/>
    </location>
</feature>
<feature type="site" description="Cleavage; by viral protease" evidence="1">
    <location>
        <begin position="443"/>
        <end position="444"/>
    </location>
</feature>
<feature type="lipid moiety-binding region" description="N-myristoyl glycine; by host" evidence="1">
    <location>
        <position position="2"/>
    </location>
</feature>